<dbReference type="EMBL" id="AF449275">
    <property type="protein sequence ID" value="AAN76079.1"/>
    <property type="molecule type" value="mRNA"/>
</dbReference>
<dbReference type="RefSeq" id="NP_001028027.1">
    <property type="nucleotide sequence ID" value="NM_001032855.1"/>
</dbReference>
<dbReference type="SMR" id="Q8HYP5"/>
<dbReference type="FunCoup" id="Q8HYP5">
    <property type="interactions" value="709"/>
</dbReference>
<dbReference type="STRING" id="9544.ENSMMUP00000070168"/>
<dbReference type="PaxDb" id="9544-ENSMMUP00000021721"/>
<dbReference type="Ensembl" id="ENSMMUT00000082253.1">
    <property type="protein sequence ID" value="ENSMMUP00000070168.1"/>
    <property type="gene ID" value="ENSMMUG00000063081.1"/>
</dbReference>
<dbReference type="GeneID" id="574183"/>
<dbReference type="KEGG" id="mcc:574183"/>
<dbReference type="CTD" id="6366"/>
<dbReference type="VEuPathDB" id="HostDB:ENSMMUG00000063081"/>
<dbReference type="VGNC" id="VGNC:104885">
    <property type="gene designation" value="CCL21"/>
</dbReference>
<dbReference type="eggNOG" id="ENOG502S8D1">
    <property type="taxonomic scope" value="Eukaryota"/>
</dbReference>
<dbReference type="GeneTree" id="ENSGT01130000278316"/>
<dbReference type="HOGENOM" id="CLU_141716_3_2_1"/>
<dbReference type="InParanoid" id="Q8HYP5"/>
<dbReference type="OMA" id="CKRTEQP"/>
<dbReference type="OrthoDB" id="9445745at2759"/>
<dbReference type="TreeFam" id="TF338224"/>
<dbReference type="Proteomes" id="UP000006718">
    <property type="component" value="Chromosome 15"/>
</dbReference>
<dbReference type="Bgee" id="ENSMMUG00000063081">
    <property type="expression patterns" value="Expressed in spleen and 16 other cell types or tissues"/>
</dbReference>
<dbReference type="GO" id="GO:0005615">
    <property type="term" value="C:extracellular space"/>
    <property type="evidence" value="ECO:0000318"/>
    <property type="project" value="GO_Central"/>
</dbReference>
<dbReference type="GO" id="GO:0048020">
    <property type="term" value="F:CCR chemokine receptor binding"/>
    <property type="evidence" value="ECO:0000318"/>
    <property type="project" value="GO_Central"/>
</dbReference>
<dbReference type="GO" id="GO:0008009">
    <property type="term" value="F:chemokine activity"/>
    <property type="evidence" value="ECO:0000318"/>
    <property type="project" value="GO_Central"/>
</dbReference>
<dbReference type="GO" id="GO:0042379">
    <property type="term" value="F:chemokine receptor binding"/>
    <property type="evidence" value="ECO:0000250"/>
    <property type="project" value="UniProtKB"/>
</dbReference>
<dbReference type="GO" id="GO:0061844">
    <property type="term" value="P:antimicrobial humoral immune response mediated by antimicrobial peptide"/>
    <property type="evidence" value="ECO:0000318"/>
    <property type="project" value="GO_Central"/>
</dbReference>
<dbReference type="GO" id="GO:0038120">
    <property type="term" value="P:CCL21-activated CCR7 signaling pathway"/>
    <property type="evidence" value="ECO:0007669"/>
    <property type="project" value="Ensembl"/>
</dbReference>
<dbReference type="GO" id="GO:0071380">
    <property type="term" value="P:cellular response to prostaglandin E stimulus"/>
    <property type="evidence" value="ECO:0007669"/>
    <property type="project" value="Ensembl"/>
</dbReference>
<dbReference type="GO" id="GO:0070098">
    <property type="term" value="P:chemokine-mediated signaling pathway"/>
    <property type="evidence" value="ECO:0000318"/>
    <property type="project" value="GO_Central"/>
</dbReference>
<dbReference type="GO" id="GO:0002407">
    <property type="term" value="P:dendritic cell chemotaxis"/>
    <property type="evidence" value="ECO:0007669"/>
    <property type="project" value="Ensembl"/>
</dbReference>
<dbReference type="GO" id="GO:0048245">
    <property type="term" value="P:eosinophil chemotaxis"/>
    <property type="evidence" value="ECO:0000318"/>
    <property type="project" value="GO_Central"/>
</dbReference>
<dbReference type="GO" id="GO:0001768">
    <property type="term" value="P:establishment of T cell polarity"/>
    <property type="evidence" value="ECO:0007669"/>
    <property type="project" value="Ensembl"/>
</dbReference>
<dbReference type="GO" id="GO:0006954">
    <property type="term" value="P:inflammatory response"/>
    <property type="evidence" value="ECO:0000318"/>
    <property type="project" value="GO_Central"/>
</dbReference>
<dbReference type="GO" id="GO:0035759">
    <property type="term" value="P:mesangial cell-matrix adhesion"/>
    <property type="evidence" value="ECO:0007669"/>
    <property type="project" value="Ensembl"/>
</dbReference>
<dbReference type="GO" id="GO:2000669">
    <property type="term" value="P:negative regulation of dendritic cell apoptotic process"/>
    <property type="evidence" value="ECO:0007669"/>
    <property type="project" value="Ensembl"/>
</dbReference>
<dbReference type="GO" id="GO:1903237">
    <property type="term" value="P:negative regulation of leukocyte tethering or rolling"/>
    <property type="evidence" value="ECO:0007669"/>
    <property type="project" value="Ensembl"/>
</dbReference>
<dbReference type="GO" id="GO:0030838">
    <property type="term" value="P:positive regulation of actin filament polymerization"/>
    <property type="evidence" value="ECO:0007669"/>
    <property type="project" value="Ensembl"/>
</dbReference>
<dbReference type="GO" id="GO:0043123">
    <property type="term" value="P:positive regulation of canonical NF-kappaB signal transduction"/>
    <property type="evidence" value="ECO:0007669"/>
    <property type="project" value="Ensembl"/>
</dbReference>
<dbReference type="GO" id="GO:0033630">
    <property type="term" value="P:positive regulation of cell adhesion mediated by integrin"/>
    <property type="evidence" value="ECO:0007669"/>
    <property type="project" value="Ensembl"/>
</dbReference>
<dbReference type="GO" id="GO:0030335">
    <property type="term" value="P:positive regulation of cell migration"/>
    <property type="evidence" value="ECO:0000318"/>
    <property type="project" value="GO_Central"/>
</dbReference>
<dbReference type="GO" id="GO:0001954">
    <property type="term" value="P:positive regulation of cell-matrix adhesion"/>
    <property type="evidence" value="ECO:0007669"/>
    <property type="project" value="Ensembl"/>
</dbReference>
<dbReference type="GO" id="GO:0070374">
    <property type="term" value="P:positive regulation of ERK1 and ERK2 cascade"/>
    <property type="evidence" value="ECO:0007669"/>
    <property type="project" value="Ensembl"/>
</dbReference>
<dbReference type="GO" id="GO:0051491">
    <property type="term" value="P:positive regulation of filopodium assembly"/>
    <property type="evidence" value="ECO:0007669"/>
    <property type="project" value="Ensembl"/>
</dbReference>
<dbReference type="GO" id="GO:0046330">
    <property type="term" value="P:positive regulation of JNK cascade"/>
    <property type="evidence" value="ECO:0007669"/>
    <property type="project" value="Ensembl"/>
</dbReference>
<dbReference type="GO" id="GO:2000529">
    <property type="term" value="P:positive regulation of myeloid dendritic cell chemotaxis"/>
    <property type="evidence" value="ECO:0007669"/>
    <property type="project" value="Ensembl"/>
</dbReference>
<dbReference type="GO" id="GO:0090023">
    <property type="term" value="P:positive regulation of neutrophil chemotaxis"/>
    <property type="evidence" value="ECO:0007669"/>
    <property type="project" value="Ensembl"/>
</dbReference>
<dbReference type="GO" id="GO:0051897">
    <property type="term" value="P:positive regulation of phosphatidylinositol 3-kinase/protein kinase B signal transduction"/>
    <property type="evidence" value="ECO:0007669"/>
    <property type="project" value="Ensembl"/>
</dbReference>
<dbReference type="GO" id="GO:0141214">
    <property type="term" value="P:positive regulation of phospholipase C/protein kinase C signal transduction"/>
    <property type="evidence" value="ECO:0007669"/>
    <property type="project" value="Ensembl"/>
</dbReference>
<dbReference type="GO" id="GO:0031274">
    <property type="term" value="P:positive regulation of pseudopodium assembly"/>
    <property type="evidence" value="ECO:0007669"/>
    <property type="project" value="Ensembl"/>
</dbReference>
<dbReference type="GO" id="GO:2000406">
    <property type="term" value="P:positive regulation of T cell migration"/>
    <property type="evidence" value="ECO:0007669"/>
    <property type="project" value="Ensembl"/>
</dbReference>
<dbReference type="GO" id="GO:0051209">
    <property type="term" value="P:release of sequestered calcium ion into cytosol"/>
    <property type="evidence" value="ECO:0007669"/>
    <property type="project" value="Ensembl"/>
</dbReference>
<dbReference type="GO" id="GO:0031529">
    <property type="term" value="P:ruffle organization"/>
    <property type="evidence" value="ECO:0007669"/>
    <property type="project" value="Ensembl"/>
</dbReference>
<dbReference type="CDD" id="cd01119">
    <property type="entry name" value="Chemokine_CC_DCCL"/>
    <property type="match status" value="1"/>
</dbReference>
<dbReference type="FunFam" id="2.40.50.40:FF:000024">
    <property type="entry name" value="C-C motif chemokine 21"/>
    <property type="match status" value="1"/>
</dbReference>
<dbReference type="Gene3D" id="2.40.50.40">
    <property type="match status" value="1"/>
</dbReference>
<dbReference type="InterPro" id="IPR039809">
    <property type="entry name" value="Chemokine_b/g/d"/>
</dbReference>
<dbReference type="InterPro" id="IPR034133">
    <property type="entry name" value="Chemokine_CC_DCCL"/>
</dbReference>
<dbReference type="InterPro" id="IPR001811">
    <property type="entry name" value="Chemokine_IL8-like_dom"/>
</dbReference>
<dbReference type="InterPro" id="IPR036048">
    <property type="entry name" value="Interleukin_8-like_sf"/>
</dbReference>
<dbReference type="PANTHER" id="PTHR12015:SF72">
    <property type="entry name" value="C-C MOTIF CHEMOKINE 21"/>
    <property type="match status" value="1"/>
</dbReference>
<dbReference type="PANTHER" id="PTHR12015">
    <property type="entry name" value="SMALL INDUCIBLE CYTOKINE A"/>
    <property type="match status" value="1"/>
</dbReference>
<dbReference type="Pfam" id="PF00048">
    <property type="entry name" value="IL8"/>
    <property type="match status" value="1"/>
</dbReference>
<dbReference type="SMART" id="SM00199">
    <property type="entry name" value="SCY"/>
    <property type="match status" value="1"/>
</dbReference>
<dbReference type="SUPFAM" id="SSF54117">
    <property type="entry name" value="Interleukin 8-like chemokines"/>
    <property type="match status" value="1"/>
</dbReference>
<organism>
    <name type="scientific">Macaca mulatta</name>
    <name type="common">Rhesus macaque</name>
    <dbReference type="NCBI Taxonomy" id="9544"/>
    <lineage>
        <taxon>Eukaryota</taxon>
        <taxon>Metazoa</taxon>
        <taxon>Chordata</taxon>
        <taxon>Craniata</taxon>
        <taxon>Vertebrata</taxon>
        <taxon>Euteleostomi</taxon>
        <taxon>Mammalia</taxon>
        <taxon>Eutheria</taxon>
        <taxon>Euarchontoglires</taxon>
        <taxon>Primates</taxon>
        <taxon>Haplorrhini</taxon>
        <taxon>Catarrhini</taxon>
        <taxon>Cercopithecidae</taxon>
        <taxon>Cercopithecinae</taxon>
        <taxon>Macaca</taxon>
    </lineage>
</organism>
<gene>
    <name type="primary">CCL21</name>
</gene>
<proteinExistence type="evidence at transcript level"/>
<keyword id="KW-0145">Chemotaxis</keyword>
<keyword id="KW-0202">Cytokine</keyword>
<keyword id="KW-1015">Disulfide bond</keyword>
<keyword id="KW-0395">Inflammatory response</keyword>
<keyword id="KW-1185">Reference proteome</keyword>
<keyword id="KW-0964">Secreted</keyword>
<keyword id="KW-0732">Signal</keyword>
<sequence>MAQSLALSLLILVLAFGIPGTQGSDGGAQDCCLKYSQRKIPAKVVRSYRKQEPSLGCSIPAILFLPRKRSQAELCADPKELWVQQLMQHLDKTPTPRKPVQGCRKDRGVPKNGKKGKGCKRTEQSQTPKGP</sequence>
<comment type="function">
    <text evidence="1">Inhibits hemopoiesis and stimulates chemotaxis. Chemotactic in vitro for thymocytes and activated T-cells, but not for B-cells, macrophages, or neutrophils. Shows preferential activity towards naive T-cells. May play a role in mediating homing of lymphocytes to secondary lymphoid organs. Binds to atypical chemokine receptor ACKR4 and mediates the recruitment of beta-arrestin (ARRB1/2) to ACKR4 (By similarity).</text>
</comment>
<comment type="subunit">
    <text evidence="2 3">Monomer. Binds to CCR7. Interacts with PDPN; relocalizes PDPN to the basolateral membrane. Interacts with TNFAIP6 (via Link domain). Interacts with GPR174.</text>
</comment>
<comment type="subcellular location">
    <subcellularLocation>
        <location evidence="1">Secreted</location>
    </subcellularLocation>
</comment>
<comment type="similarity">
    <text evidence="6">Belongs to the intercrine beta (chemokine CC) family.</text>
</comment>
<evidence type="ECO:0000250" key="1"/>
<evidence type="ECO:0000250" key="2">
    <source>
        <dbReference type="UniProtKB" id="O00585"/>
    </source>
</evidence>
<evidence type="ECO:0000250" key="3">
    <source>
        <dbReference type="UniProtKB" id="P84444"/>
    </source>
</evidence>
<evidence type="ECO:0000255" key="4"/>
<evidence type="ECO:0000256" key="5">
    <source>
        <dbReference type="SAM" id="MobiDB-lite"/>
    </source>
</evidence>
<evidence type="ECO:0000305" key="6"/>
<name>CCL21_MACMU</name>
<accession>Q8HYP5</accession>
<reference key="1">
    <citation type="journal article" date="2002" name="Cytokine">
        <title>Molecular cloning and sequencing of 25 different rhesus macaque chemokine cDNAs reveals evolutionary conservation among C, CC, CXC, and CX3C families of chemokines.</title>
        <authorList>
            <person name="Basu S."/>
            <person name="Schaefer T.M."/>
            <person name="Ghosh M."/>
            <person name="Fuller C.L."/>
            <person name="Reinhart T.A."/>
        </authorList>
    </citation>
    <scope>NUCLEOTIDE SEQUENCE [MRNA]</scope>
</reference>
<feature type="signal peptide" evidence="4">
    <location>
        <begin position="1"/>
        <end position="23"/>
    </location>
</feature>
<feature type="chain" id="PRO_0000005221" description="C-C motif chemokine 21">
    <location>
        <begin position="24"/>
        <end position="131"/>
    </location>
</feature>
<feature type="region of interest" description="Disordered" evidence="5">
    <location>
        <begin position="89"/>
        <end position="131"/>
    </location>
</feature>
<feature type="disulfide bond" evidence="1">
    <location>
        <begin position="31"/>
        <end position="57"/>
    </location>
</feature>
<feature type="disulfide bond" evidence="1">
    <location>
        <begin position="32"/>
        <end position="75"/>
    </location>
</feature>
<feature type="disulfide bond" evidence="4">
    <location>
        <begin position="103"/>
        <end position="119"/>
    </location>
</feature>
<protein>
    <recommendedName>
        <fullName>C-C motif chemokine 21</fullName>
    </recommendedName>
    <alternativeName>
        <fullName>Small-inducible cytokine A21</fullName>
    </alternativeName>
</protein>